<evidence type="ECO:0000250" key="1">
    <source>
        <dbReference type="UniProtKB" id="Q70EL2"/>
    </source>
</evidence>
<evidence type="ECO:0000255" key="2">
    <source>
        <dbReference type="PROSITE-ProRule" id="PRU00502"/>
    </source>
</evidence>
<evidence type="ECO:0000255" key="3">
    <source>
        <dbReference type="PROSITE-ProRule" id="PRU01035"/>
    </source>
</evidence>
<evidence type="ECO:0000256" key="4">
    <source>
        <dbReference type="SAM" id="MobiDB-lite"/>
    </source>
</evidence>
<evidence type="ECO:0000269" key="5">
    <source>
    </source>
</evidence>
<evidence type="ECO:0000303" key="6">
    <source>
    </source>
</evidence>
<evidence type="ECO:0000305" key="7"/>
<evidence type="ECO:0000312" key="8">
    <source>
        <dbReference type="EMBL" id="AAF46033.1"/>
    </source>
</evidence>
<evidence type="ECO:0000312" key="9">
    <source>
        <dbReference type="EMBL" id="AAK93270.1"/>
    </source>
</evidence>
<evidence type="ECO:0000312" key="10">
    <source>
        <dbReference type="FlyBase" id="FBgn0029763"/>
    </source>
</evidence>
<evidence type="ECO:0000312" key="11">
    <source>
        <dbReference type="Proteomes" id="UP000000803"/>
    </source>
</evidence>
<accession>Q9W4C3</accession>
<feature type="chain" id="PRO_0000458480" description="Ubiquitin carboxyl-terminal hydrolase 16/45">
    <location>
        <begin position="1"/>
        <end position="1126"/>
    </location>
</feature>
<feature type="zinc finger region" description="UBP-type" evidence="2">
    <location>
        <begin position="43"/>
        <end position="181"/>
    </location>
</feature>
<feature type="region of interest" description="Disordered" evidence="4">
    <location>
        <begin position="1"/>
        <end position="44"/>
    </location>
</feature>
<feature type="region of interest" description="Disordered" evidence="4">
    <location>
        <begin position="215"/>
        <end position="264"/>
    </location>
</feature>
<feature type="region of interest" description="Disordered" evidence="4">
    <location>
        <begin position="513"/>
        <end position="547"/>
    </location>
</feature>
<feature type="region of interest" description="Disordered" evidence="4">
    <location>
        <begin position="570"/>
        <end position="762"/>
    </location>
</feature>
<feature type="region of interest" description="Disordered" evidence="4">
    <location>
        <begin position="795"/>
        <end position="833"/>
    </location>
</feature>
<feature type="region of interest" description="Disordered" evidence="4">
    <location>
        <begin position="1037"/>
        <end position="1089"/>
    </location>
</feature>
<feature type="compositionally biased region" description="Basic and acidic residues" evidence="4">
    <location>
        <begin position="1"/>
        <end position="15"/>
    </location>
</feature>
<feature type="compositionally biased region" description="Polar residues" evidence="4">
    <location>
        <begin position="32"/>
        <end position="44"/>
    </location>
</feature>
<feature type="compositionally biased region" description="Low complexity" evidence="4">
    <location>
        <begin position="215"/>
        <end position="229"/>
    </location>
</feature>
<feature type="compositionally biased region" description="Low complexity" evidence="4">
    <location>
        <begin position="254"/>
        <end position="264"/>
    </location>
</feature>
<feature type="compositionally biased region" description="Low complexity" evidence="4">
    <location>
        <begin position="524"/>
        <end position="539"/>
    </location>
</feature>
<feature type="compositionally biased region" description="Basic residues" evidence="4">
    <location>
        <begin position="586"/>
        <end position="598"/>
    </location>
</feature>
<feature type="compositionally biased region" description="Low complexity" evidence="4">
    <location>
        <begin position="599"/>
        <end position="614"/>
    </location>
</feature>
<feature type="compositionally biased region" description="Low complexity" evidence="4">
    <location>
        <begin position="646"/>
        <end position="657"/>
    </location>
</feature>
<feature type="compositionally biased region" description="Polar residues" evidence="4">
    <location>
        <begin position="674"/>
        <end position="701"/>
    </location>
</feature>
<feature type="compositionally biased region" description="Basic and acidic residues" evidence="4">
    <location>
        <begin position="705"/>
        <end position="718"/>
    </location>
</feature>
<feature type="compositionally biased region" description="Low complexity" evidence="4">
    <location>
        <begin position="730"/>
        <end position="762"/>
    </location>
</feature>
<feature type="compositionally biased region" description="Basic and acidic residues" evidence="4">
    <location>
        <begin position="807"/>
        <end position="816"/>
    </location>
</feature>
<feature type="compositionally biased region" description="Low complexity" evidence="4">
    <location>
        <begin position="821"/>
        <end position="830"/>
    </location>
</feature>
<feature type="compositionally biased region" description="Low complexity" evidence="4">
    <location>
        <begin position="1046"/>
        <end position="1086"/>
    </location>
</feature>
<feature type="active site" description="Nucleophile" evidence="3">
    <location>
        <position position="315"/>
    </location>
</feature>
<feature type="active site" description="Proton acceptor" evidence="3">
    <location>
        <position position="984"/>
    </location>
</feature>
<feature type="binding site" evidence="2">
    <location>
        <position position="45"/>
    </location>
    <ligand>
        <name>Zn(2+)</name>
        <dbReference type="ChEBI" id="CHEBI:29105"/>
        <label>1</label>
    </ligand>
</feature>
<feature type="binding site" evidence="2">
    <location>
        <position position="47"/>
    </location>
    <ligand>
        <name>Zn(2+)</name>
        <dbReference type="ChEBI" id="CHEBI:29105"/>
        <label>1</label>
    </ligand>
</feature>
<feature type="binding site" evidence="2">
    <location>
        <position position="70"/>
    </location>
    <ligand>
        <name>Zn(2+)</name>
        <dbReference type="ChEBI" id="CHEBI:29105"/>
        <label>2</label>
    </ligand>
</feature>
<feature type="binding site" evidence="2">
    <location>
        <position position="73"/>
    </location>
    <ligand>
        <name>Zn(2+)</name>
        <dbReference type="ChEBI" id="CHEBI:29105"/>
        <label>2</label>
    </ligand>
</feature>
<feature type="binding site" evidence="2">
    <location>
        <position position="111"/>
    </location>
    <ligand>
        <name>Zn(2+)</name>
        <dbReference type="ChEBI" id="CHEBI:29105"/>
        <label>3</label>
    </ligand>
</feature>
<feature type="binding site" evidence="2">
    <location>
        <position position="114"/>
    </location>
    <ligand>
        <name>Zn(2+)</name>
        <dbReference type="ChEBI" id="CHEBI:29105"/>
        <label>3</label>
    </ligand>
</feature>
<feature type="binding site" evidence="2">
    <location>
        <position position="119"/>
    </location>
    <ligand>
        <name>Zn(2+)</name>
        <dbReference type="ChEBI" id="CHEBI:29105"/>
        <label>2</label>
    </ligand>
</feature>
<feature type="binding site" evidence="2">
    <location>
        <position position="126"/>
    </location>
    <ligand>
        <name>Zn(2+)</name>
        <dbReference type="ChEBI" id="CHEBI:29105"/>
        <label>2</label>
    </ligand>
</feature>
<feature type="binding site" evidence="2">
    <location>
        <position position="130"/>
    </location>
    <ligand>
        <name>Zn(2+)</name>
        <dbReference type="ChEBI" id="CHEBI:29105"/>
        <label>3</label>
    </ligand>
</feature>
<feature type="binding site" evidence="2">
    <location>
        <position position="139"/>
    </location>
    <ligand>
        <name>Zn(2+)</name>
        <dbReference type="ChEBI" id="CHEBI:29105"/>
        <label>3</label>
    </ligand>
</feature>
<feature type="binding site" evidence="2">
    <location>
        <position position="152"/>
    </location>
    <ligand>
        <name>Zn(2+)</name>
        <dbReference type="ChEBI" id="CHEBI:29105"/>
        <label>1</label>
    </ligand>
</feature>
<feature type="binding site" evidence="2">
    <location>
        <position position="155"/>
    </location>
    <ligand>
        <name>Zn(2+)</name>
        <dbReference type="ChEBI" id="CHEBI:29105"/>
        <label>1</label>
    </ligand>
</feature>
<name>UBP64_DROME</name>
<proteinExistence type="evidence at transcript level"/>
<protein>
    <recommendedName>
        <fullName evidence="6">Ubiquitin carboxyl-terminal hydrolase 16/45</fullName>
        <ecNumber evidence="1">3.4.19.12</ecNumber>
    </recommendedName>
    <alternativeName>
        <fullName evidence="10">Ubiquitin specific protease 16/45</fullName>
    </alternativeName>
</protein>
<keyword id="KW-0378">Hydrolase</keyword>
<keyword id="KW-0479">Metal-binding</keyword>
<keyword id="KW-0597">Phosphoprotein</keyword>
<keyword id="KW-0645">Protease</keyword>
<keyword id="KW-1185">Reference proteome</keyword>
<keyword id="KW-0862">Zinc</keyword>
<keyword id="KW-0863">Zinc-finger</keyword>
<gene>
    <name evidence="6 10" type="primary">Usp16-45</name>
    <name evidence="8" type="synonym">Usp16</name>
    <name evidence="8" type="synonym">Usp45</name>
    <name evidence="10" type="ORF">CG4165</name>
</gene>
<reference evidence="11" key="1">
    <citation type="journal article" date="2000" name="Science">
        <title>The genome sequence of Drosophila melanogaster.</title>
        <authorList>
            <person name="Adams M.D."/>
            <person name="Celniker S.E."/>
            <person name="Holt R.A."/>
            <person name="Evans C.A."/>
            <person name="Gocayne J.D."/>
            <person name="Amanatides P.G."/>
            <person name="Scherer S.E."/>
            <person name="Li P.W."/>
            <person name="Hoskins R.A."/>
            <person name="Galle R.F."/>
            <person name="George R.A."/>
            <person name="Lewis S.E."/>
            <person name="Richards S."/>
            <person name="Ashburner M."/>
            <person name="Henderson S.N."/>
            <person name="Sutton G.G."/>
            <person name="Wortman J.R."/>
            <person name="Yandell M.D."/>
            <person name="Zhang Q."/>
            <person name="Chen L.X."/>
            <person name="Brandon R.C."/>
            <person name="Rogers Y.-H.C."/>
            <person name="Blazej R.G."/>
            <person name="Champe M."/>
            <person name="Pfeiffer B.D."/>
            <person name="Wan K.H."/>
            <person name="Doyle C."/>
            <person name="Baxter E.G."/>
            <person name="Helt G."/>
            <person name="Nelson C.R."/>
            <person name="Miklos G.L.G."/>
            <person name="Abril J.F."/>
            <person name="Agbayani A."/>
            <person name="An H.-J."/>
            <person name="Andrews-Pfannkoch C."/>
            <person name="Baldwin D."/>
            <person name="Ballew R.M."/>
            <person name="Basu A."/>
            <person name="Baxendale J."/>
            <person name="Bayraktaroglu L."/>
            <person name="Beasley E.M."/>
            <person name="Beeson K.Y."/>
            <person name="Benos P.V."/>
            <person name="Berman B.P."/>
            <person name="Bhandari D."/>
            <person name="Bolshakov S."/>
            <person name="Borkova D."/>
            <person name="Botchan M.R."/>
            <person name="Bouck J."/>
            <person name="Brokstein P."/>
            <person name="Brottier P."/>
            <person name="Burtis K.C."/>
            <person name="Busam D.A."/>
            <person name="Butler H."/>
            <person name="Cadieu E."/>
            <person name="Center A."/>
            <person name="Chandra I."/>
            <person name="Cherry J.M."/>
            <person name="Cawley S."/>
            <person name="Dahlke C."/>
            <person name="Davenport L.B."/>
            <person name="Davies P."/>
            <person name="de Pablos B."/>
            <person name="Delcher A."/>
            <person name="Deng Z."/>
            <person name="Mays A.D."/>
            <person name="Dew I."/>
            <person name="Dietz S.M."/>
            <person name="Dodson K."/>
            <person name="Doup L.E."/>
            <person name="Downes M."/>
            <person name="Dugan-Rocha S."/>
            <person name="Dunkov B.C."/>
            <person name="Dunn P."/>
            <person name="Durbin K.J."/>
            <person name="Evangelista C.C."/>
            <person name="Ferraz C."/>
            <person name="Ferriera S."/>
            <person name="Fleischmann W."/>
            <person name="Fosler C."/>
            <person name="Gabrielian A.E."/>
            <person name="Garg N.S."/>
            <person name="Gelbart W.M."/>
            <person name="Glasser K."/>
            <person name="Glodek A."/>
            <person name="Gong F."/>
            <person name="Gorrell J.H."/>
            <person name="Gu Z."/>
            <person name="Guan P."/>
            <person name="Harris M."/>
            <person name="Harris N.L."/>
            <person name="Harvey D.A."/>
            <person name="Heiman T.J."/>
            <person name="Hernandez J.R."/>
            <person name="Houck J."/>
            <person name="Hostin D."/>
            <person name="Houston K.A."/>
            <person name="Howland T.J."/>
            <person name="Wei M.-H."/>
            <person name="Ibegwam C."/>
            <person name="Jalali M."/>
            <person name="Kalush F."/>
            <person name="Karpen G.H."/>
            <person name="Ke Z."/>
            <person name="Kennison J.A."/>
            <person name="Ketchum K.A."/>
            <person name="Kimmel B.E."/>
            <person name="Kodira C.D."/>
            <person name="Kraft C.L."/>
            <person name="Kravitz S."/>
            <person name="Kulp D."/>
            <person name="Lai Z."/>
            <person name="Lasko P."/>
            <person name="Lei Y."/>
            <person name="Levitsky A.A."/>
            <person name="Li J.H."/>
            <person name="Li Z."/>
            <person name="Liang Y."/>
            <person name="Lin X."/>
            <person name="Liu X."/>
            <person name="Mattei B."/>
            <person name="McIntosh T.C."/>
            <person name="McLeod M.P."/>
            <person name="McPherson D."/>
            <person name="Merkulov G."/>
            <person name="Milshina N.V."/>
            <person name="Mobarry C."/>
            <person name="Morris J."/>
            <person name="Moshrefi A."/>
            <person name="Mount S.M."/>
            <person name="Moy M."/>
            <person name="Murphy B."/>
            <person name="Murphy L."/>
            <person name="Muzny D.M."/>
            <person name="Nelson D.L."/>
            <person name="Nelson D.R."/>
            <person name="Nelson K.A."/>
            <person name="Nixon K."/>
            <person name="Nusskern D.R."/>
            <person name="Pacleb J.M."/>
            <person name="Palazzolo M."/>
            <person name="Pittman G.S."/>
            <person name="Pan S."/>
            <person name="Pollard J."/>
            <person name="Puri V."/>
            <person name="Reese M.G."/>
            <person name="Reinert K."/>
            <person name="Remington K."/>
            <person name="Saunders R.D.C."/>
            <person name="Scheeler F."/>
            <person name="Shen H."/>
            <person name="Shue B.C."/>
            <person name="Siden-Kiamos I."/>
            <person name="Simpson M."/>
            <person name="Skupski M.P."/>
            <person name="Smith T.J."/>
            <person name="Spier E."/>
            <person name="Spradling A.C."/>
            <person name="Stapleton M."/>
            <person name="Strong R."/>
            <person name="Sun E."/>
            <person name="Svirskas R."/>
            <person name="Tector C."/>
            <person name="Turner R."/>
            <person name="Venter E."/>
            <person name="Wang A.H."/>
            <person name="Wang X."/>
            <person name="Wang Z.-Y."/>
            <person name="Wassarman D.A."/>
            <person name="Weinstock G.M."/>
            <person name="Weissenbach J."/>
            <person name="Williams S.M."/>
            <person name="Woodage T."/>
            <person name="Worley K.C."/>
            <person name="Wu D."/>
            <person name="Yang S."/>
            <person name="Yao Q.A."/>
            <person name="Ye J."/>
            <person name="Yeh R.-F."/>
            <person name="Zaveri J.S."/>
            <person name="Zhan M."/>
            <person name="Zhang G."/>
            <person name="Zhao Q."/>
            <person name="Zheng L."/>
            <person name="Zheng X.H."/>
            <person name="Zhong F.N."/>
            <person name="Zhong W."/>
            <person name="Zhou X."/>
            <person name="Zhu S.C."/>
            <person name="Zhu X."/>
            <person name="Smith H.O."/>
            <person name="Gibbs R.A."/>
            <person name="Myers E.W."/>
            <person name="Rubin G.M."/>
            <person name="Venter J.C."/>
        </authorList>
    </citation>
    <scope>NUCLEOTIDE SEQUENCE [LARGE SCALE GENOMIC DNA]</scope>
    <source>
        <strain>Berkeley</strain>
    </source>
</reference>
<reference evidence="11" key="2">
    <citation type="journal article" date="2002" name="Genome Biol.">
        <title>Annotation of the Drosophila melanogaster euchromatic genome: a systematic review.</title>
        <authorList>
            <person name="Misra S."/>
            <person name="Crosby M.A."/>
            <person name="Mungall C.J."/>
            <person name="Matthews B.B."/>
            <person name="Campbell K.S."/>
            <person name="Hradecky P."/>
            <person name="Huang Y."/>
            <person name="Kaminker J.S."/>
            <person name="Millburn G.H."/>
            <person name="Prochnik S.E."/>
            <person name="Smith C.D."/>
            <person name="Tupy J.L."/>
            <person name="Whitfield E.J."/>
            <person name="Bayraktaroglu L."/>
            <person name="Berman B.P."/>
            <person name="Bettencourt B.R."/>
            <person name="Celniker S.E."/>
            <person name="de Grey A.D.N.J."/>
            <person name="Drysdale R.A."/>
            <person name="Harris N.L."/>
            <person name="Richter J."/>
            <person name="Russo S."/>
            <person name="Schroeder A.J."/>
            <person name="Shu S.Q."/>
            <person name="Stapleton M."/>
            <person name="Yamada C."/>
            <person name="Ashburner M."/>
            <person name="Gelbart W.M."/>
            <person name="Rubin G.M."/>
            <person name="Lewis S.E."/>
        </authorList>
    </citation>
    <scope>GENOME REANNOTATION</scope>
    <source>
        <strain>Berkeley</strain>
    </source>
</reference>
<reference evidence="9" key="3">
    <citation type="journal article" date="2002" name="Genome Biol.">
        <title>A Drosophila full-length cDNA resource.</title>
        <authorList>
            <person name="Stapleton M."/>
            <person name="Carlson J.W."/>
            <person name="Brokstein P."/>
            <person name="Yu C."/>
            <person name="Champe M."/>
            <person name="George R.A."/>
            <person name="Guarin H."/>
            <person name="Kronmiller B."/>
            <person name="Pacleb J.M."/>
            <person name="Park S."/>
            <person name="Wan K.H."/>
            <person name="Rubin G.M."/>
            <person name="Celniker S.E."/>
        </authorList>
    </citation>
    <scope>NUCLEOTIDE SEQUENCE [LARGE SCALE MRNA]</scope>
    <source>
        <strain>Berkeley</strain>
        <tissue>Embryo</tissue>
    </source>
</reference>
<reference evidence="7" key="4">
    <citation type="journal article" date="2022" name="Sci. Rep.">
        <title>Usp5, Usp34, and Otu1 deubiquitylases mediate DNA repair in Drosophila melanogaster.</title>
        <authorList>
            <person name="Pahi Z.G."/>
            <person name="Kovacs L."/>
            <person name="Szucs D."/>
            <person name="Borsos B.N."/>
            <person name="Deak P."/>
            <person name="Pankotai T."/>
        </authorList>
    </citation>
    <scope>FUNCTION</scope>
    <scope>DISRUPTION PHENOTYPE</scope>
</reference>
<dbReference type="EC" id="3.4.19.12" evidence="1"/>
<dbReference type="EMBL" id="AE014298">
    <property type="protein sequence ID" value="AAF46033.1"/>
    <property type="molecule type" value="Genomic_DNA"/>
</dbReference>
<dbReference type="EMBL" id="AE014298">
    <property type="protein sequence ID" value="AAN09140.1"/>
    <property type="molecule type" value="Genomic_DNA"/>
</dbReference>
<dbReference type="EMBL" id="AE014298">
    <property type="protein sequence ID" value="AAN09141.1"/>
    <property type="molecule type" value="Genomic_DNA"/>
</dbReference>
<dbReference type="EMBL" id="AE014298">
    <property type="protein sequence ID" value="AAN09142.1"/>
    <property type="molecule type" value="Genomic_DNA"/>
</dbReference>
<dbReference type="EMBL" id="AE014298">
    <property type="protein sequence ID" value="AHN59361.1"/>
    <property type="molecule type" value="Genomic_DNA"/>
</dbReference>
<dbReference type="EMBL" id="AY051846">
    <property type="protein sequence ID" value="AAK93270.1"/>
    <property type="molecule type" value="mRNA"/>
</dbReference>
<dbReference type="RefSeq" id="NP_001284890.1">
    <property type="nucleotide sequence ID" value="NM_001297961.1"/>
</dbReference>
<dbReference type="RefSeq" id="NP_572220.1">
    <property type="nucleotide sequence ID" value="NM_131992.3"/>
</dbReference>
<dbReference type="RefSeq" id="NP_726993.1">
    <property type="nucleotide sequence ID" value="NM_167035.2"/>
</dbReference>
<dbReference type="RefSeq" id="NP_726994.1">
    <property type="nucleotide sequence ID" value="NM_167036.2"/>
</dbReference>
<dbReference type="RefSeq" id="NP_726995.1">
    <property type="nucleotide sequence ID" value="NM_167037.2"/>
</dbReference>
<dbReference type="SMR" id="Q9W4C3"/>
<dbReference type="FunCoup" id="Q9W4C3">
    <property type="interactions" value="2523"/>
</dbReference>
<dbReference type="IntAct" id="Q9W4C3">
    <property type="interactions" value="2"/>
</dbReference>
<dbReference type="STRING" id="7227.FBpp0309404"/>
<dbReference type="GlyGen" id="Q9W4C3">
    <property type="glycosylation" value="1 site"/>
</dbReference>
<dbReference type="PaxDb" id="7227-FBpp0070738"/>
<dbReference type="DNASU" id="31458"/>
<dbReference type="EnsemblMetazoa" id="FBtr0070772">
    <property type="protein sequence ID" value="FBpp0070738"/>
    <property type="gene ID" value="FBgn0029763"/>
</dbReference>
<dbReference type="EnsemblMetazoa" id="FBtr0070773">
    <property type="protein sequence ID" value="FBpp0070739"/>
    <property type="gene ID" value="FBgn0029763"/>
</dbReference>
<dbReference type="EnsemblMetazoa" id="FBtr0070775">
    <property type="protein sequence ID" value="FBpp0070741"/>
    <property type="gene ID" value="FBgn0029763"/>
</dbReference>
<dbReference type="EnsemblMetazoa" id="FBtr0340461">
    <property type="protein sequence ID" value="FBpp0309403"/>
    <property type="gene ID" value="FBgn0029763"/>
</dbReference>
<dbReference type="EnsemblMetazoa" id="FBtr0340462">
    <property type="protein sequence ID" value="FBpp0309404"/>
    <property type="gene ID" value="FBgn0029763"/>
</dbReference>
<dbReference type="GeneID" id="31458"/>
<dbReference type="KEGG" id="dme:Dmel_CG4165"/>
<dbReference type="UCSC" id="CG4165-RA">
    <property type="organism name" value="d. melanogaster"/>
</dbReference>
<dbReference type="AGR" id="FB:FBgn0029763"/>
<dbReference type="CTD" id="31458"/>
<dbReference type="FlyBase" id="FBgn0029763">
    <property type="gene designation" value="Usp16-45"/>
</dbReference>
<dbReference type="VEuPathDB" id="VectorBase:FBgn0029763"/>
<dbReference type="eggNOG" id="KOG1873">
    <property type="taxonomic scope" value="Eukaryota"/>
</dbReference>
<dbReference type="GeneTree" id="ENSGT00940000176220"/>
<dbReference type="HOGENOM" id="CLU_007938_0_0_1"/>
<dbReference type="OMA" id="AVGQWVY"/>
<dbReference type="OrthoDB" id="2020758at2759"/>
<dbReference type="Reactome" id="R-DME-1169408">
    <property type="pathway name" value="ISG15 antiviral mechanism"/>
</dbReference>
<dbReference type="Reactome" id="R-DME-445989">
    <property type="pathway name" value="TAK1-dependent IKK and NF-kappa-B activation"/>
</dbReference>
<dbReference type="Reactome" id="R-DME-9758274">
    <property type="pathway name" value="Regulation of NF-kappa B signaling"/>
</dbReference>
<dbReference type="BioGRID-ORCS" id="31458">
    <property type="hits" value="0 hits in 3 CRISPR screens"/>
</dbReference>
<dbReference type="GenomeRNAi" id="31458"/>
<dbReference type="PRO" id="PR:Q9W4C3"/>
<dbReference type="Proteomes" id="UP000000803">
    <property type="component" value="Chromosome X"/>
</dbReference>
<dbReference type="Bgee" id="FBgn0029763">
    <property type="expression patterns" value="Expressed in cleaving embryo and 131 other cell types or tissues"/>
</dbReference>
<dbReference type="GO" id="GO:0005829">
    <property type="term" value="C:cytosol"/>
    <property type="evidence" value="ECO:0000318"/>
    <property type="project" value="GO_Central"/>
</dbReference>
<dbReference type="GO" id="GO:0005634">
    <property type="term" value="C:nucleus"/>
    <property type="evidence" value="ECO:0000318"/>
    <property type="project" value="GO_Central"/>
</dbReference>
<dbReference type="GO" id="GO:0004843">
    <property type="term" value="F:cysteine-type deubiquitinase activity"/>
    <property type="evidence" value="ECO:0000250"/>
    <property type="project" value="FlyBase"/>
</dbReference>
<dbReference type="GO" id="GO:0008270">
    <property type="term" value="F:zinc ion binding"/>
    <property type="evidence" value="ECO:0007669"/>
    <property type="project" value="UniProtKB-KW"/>
</dbReference>
<dbReference type="GO" id="GO:0016579">
    <property type="term" value="P:protein deubiquitination"/>
    <property type="evidence" value="ECO:0007669"/>
    <property type="project" value="InterPro"/>
</dbReference>
<dbReference type="GO" id="GO:0006508">
    <property type="term" value="P:proteolysis"/>
    <property type="evidence" value="ECO:0007669"/>
    <property type="project" value="UniProtKB-KW"/>
</dbReference>
<dbReference type="GO" id="GO:0031647">
    <property type="term" value="P:regulation of protein stability"/>
    <property type="evidence" value="ECO:0000318"/>
    <property type="project" value="GO_Central"/>
</dbReference>
<dbReference type="CDD" id="cd02667">
    <property type="entry name" value="Peptidase_C19K"/>
    <property type="match status" value="1"/>
</dbReference>
<dbReference type="FunFam" id="3.30.40.10:FF:000147">
    <property type="entry name" value="Ubiquitin carboxyl-terminal hydrolase 16"/>
    <property type="match status" value="1"/>
</dbReference>
<dbReference type="FunFam" id="3.90.70.10:FF:000129">
    <property type="entry name" value="Ubiquitinyl hydrolase 1"/>
    <property type="match status" value="1"/>
</dbReference>
<dbReference type="Gene3D" id="3.90.70.10">
    <property type="entry name" value="Cysteine proteinases"/>
    <property type="match status" value="2"/>
</dbReference>
<dbReference type="Gene3D" id="3.30.40.10">
    <property type="entry name" value="Zinc/RING finger domain, C3HC4 (zinc finger)"/>
    <property type="match status" value="1"/>
</dbReference>
<dbReference type="InterPro" id="IPR038765">
    <property type="entry name" value="Papain-like_cys_pep_sf"/>
</dbReference>
<dbReference type="InterPro" id="IPR050164">
    <property type="entry name" value="Peptidase_C19"/>
</dbReference>
<dbReference type="InterPro" id="IPR001394">
    <property type="entry name" value="Peptidase_C19_UCH"/>
</dbReference>
<dbReference type="InterPro" id="IPR018200">
    <property type="entry name" value="USP_CS"/>
</dbReference>
<dbReference type="InterPro" id="IPR028889">
    <property type="entry name" value="USP_dom"/>
</dbReference>
<dbReference type="InterPro" id="IPR013083">
    <property type="entry name" value="Znf_RING/FYVE/PHD"/>
</dbReference>
<dbReference type="InterPro" id="IPR001607">
    <property type="entry name" value="Znf_UBP"/>
</dbReference>
<dbReference type="PANTHER" id="PTHR24006:SF781">
    <property type="entry name" value="LD34905P"/>
    <property type="match status" value="1"/>
</dbReference>
<dbReference type="PANTHER" id="PTHR24006">
    <property type="entry name" value="UBIQUITIN CARBOXYL-TERMINAL HYDROLASE"/>
    <property type="match status" value="1"/>
</dbReference>
<dbReference type="Pfam" id="PF00443">
    <property type="entry name" value="UCH"/>
    <property type="match status" value="1"/>
</dbReference>
<dbReference type="Pfam" id="PF02148">
    <property type="entry name" value="zf-UBP"/>
    <property type="match status" value="1"/>
</dbReference>
<dbReference type="SUPFAM" id="SSF54001">
    <property type="entry name" value="Cysteine proteinases"/>
    <property type="match status" value="1"/>
</dbReference>
<dbReference type="SUPFAM" id="SSF57850">
    <property type="entry name" value="RING/U-box"/>
    <property type="match status" value="1"/>
</dbReference>
<dbReference type="PROSITE" id="PS00972">
    <property type="entry name" value="USP_1"/>
    <property type="match status" value="1"/>
</dbReference>
<dbReference type="PROSITE" id="PS00973">
    <property type="entry name" value="USP_2"/>
    <property type="match status" value="1"/>
</dbReference>
<dbReference type="PROSITE" id="PS50235">
    <property type="entry name" value="USP_3"/>
    <property type="match status" value="1"/>
</dbReference>
<dbReference type="PROSITE" id="PS50271">
    <property type="entry name" value="ZF_UBP"/>
    <property type="match status" value="1"/>
</dbReference>
<comment type="function">
    <text evidence="5">Involved in the regulation of DNA damage repair.</text>
</comment>
<comment type="catalytic activity">
    <reaction evidence="1">
        <text>Thiol-dependent hydrolysis of ester, thioester, amide, peptide and isopeptide bonds formed by the C-terminal Gly of ubiquitin (a 76-residue protein attached to proteins as an intracellular targeting signal).</text>
        <dbReference type="EC" id="3.4.19.12"/>
    </reaction>
</comment>
<comment type="disruption phenotype">
    <text evidence="5">RNAi-mediated knockdown in third instar larvae results in a significant reduction in survival in response to UV radiation.</text>
</comment>
<comment type="similarity">
    <text evidence="7">Belongs to the peptidase C19 family.</text>
</comment>
<organism evidence="11">
    <name type="scientific">Drosophila melanogaster</name>
    <name type="common">Fruit fly</name>
    <dbReference type="NCBI Taxonomy" id="7227"/>
    <lineage>
        <taxon>Eukaryota</taxon>
        <taxon>Metazoa</taxon>
        <taxon>Ecdysozoa</taxon>
        <taxon>Arthropoda</taxon>
        <taxon>Hexapoda</taxon>
        <taxon>Insecta</taxon>
        <taxon>Pterygota</taxon>
        <taxon>Neoptera</taxon>
        <taxon>Endopterygota</taxon>
        <taxon>Diptera</taxon>
        <taxon>Brachycera</taxon>
        <taxon>Muscomorpha</taxon>
        <taxon>Ephydroidea</taxon>
        <taxon>Drosophilidae</taxon>
        <taxon>Drosophila</taxon>
        <taxon>Sophophora</taxon>
    </lineage>
</organism>
<sequence>MVKKRQADSRDHDCSTDSGNEDLHHRKGLGSPGQSDGATPTTASCQHIKKAVDAARLRRLLKSTGLLYECSQCQKLGKTAGSAAGAGASEGAVGPGGNPVTFEFDNTLWLCLKCGSQLCGRARHKHALEHYQTPHSDSHALAMNTRSFDIWCYECDMKICSNLRKNLLECVELVKKLAQKPPTSTVTPSTPTISYIEEKLKAALEHLTPIVPMTGGSFDDSSSRGSLAAAGGGGGVGSSRNRQVAIPMPPPEPSSGLSTSDSLTSVPGMAKRIDQYSATTNGNTGNKRLLTLETPRIENERLPRVRGLTNLGNTCFFNAVMQCLAQTPFLLSVLKELSEPGEEFILPGGTFTIKDKGDIELPMIKGTLSSWGGLTAALANALEELQAGGSVFTPRKLFDRLCVKCPQFTGGDQHDAHELLRQLLESVRNEDLKRYQRVILQNLGYKDQDVNSVSEEMRQKCKIYGNQAGDRILRPEQVFRGFLVSTLTCQDCHNVSSRHEYFLDMSLPVAVEKPQPPQRRKPSPELSLTSSSSSVTPSTGQPTINTKFTDGSVNFTASSPSFFLHAHEAASLGPSKSQVKKEKERQRKAKRAAKKRQKSSLNLNGNDSGNGNELAESVDQDDASLASLGAGDGQANDGLEQTNGQTEDSTTSSVTTSEHSDADVEDNLVEDTAAPSTNNVPSSTASLTAPSKTYMDSNGNAQPPGEKRDDTPEHMDKDSLEEDENDSGIATSPAPTATNSSTSTSATGNNNSVAGSGLSGSSGALEDPLAPASLVTAGLSEKGASVIRQVSVGAEQGASNGTEDADGEAKAIEQPEKTPSQAQAMAQAQARTKRVRTQSYSDWSTTIAPRYQCEDGECSVQSCLNNFTAVELMTGQNKVGCDSCTQRINGSDPKAKSVNTNATKQLLVSSPPAVLILHLKRFQLGPRCIFRKLTRPVSYPNLLDIAAFCGSKVKNLPNIDRKQKKLLYALYGVVEHSGGMYGGHYTAYVKVRPKVAPGDKRWKFLPHGSKAELDQDDDQLKKLEELLAKEKAREQHLKVLDDSDDFSNSSSNSSTSDESQTPATPLEEQQTQQAQQPQQPQQLEEAANVRAPPGKWYYVSDSRVQEVSEDTALKAQAYLLFYERIY</sequence>